<name>TRMB_BACCQ</name>
<keyword id="KW-0489">Methyltransferase</keyword>
<keyword id="KW-0949">S-adenosyl-L-methionine</keyword>
<keyword id="KW-0808">Transferase</keyword>
<keyword id="KW-0819">tRNA processing</keyword>
<proteinExistence type="inferred from homology"/>
<reference key="1">
    <citation type="journal article" date="2009" name="J. Bacteriol.">
        <title>Complete genome sequence of the extremophilic Bacillus cereus strain Q1 with industrial applications.</title>
        <authorList>
            <person name="Xiong Z."/>
            <person name="Jiang Y."/>
            <person name="Qi D."/>
            <person name="Lu H."/>
            <person name="Yang F."/>
            <person name="Yang J."/>
            <person name="Chen L."/>
            <person name="Sun L."/>
            <person name="Xu X."/>
            <person name="Xue Y."/>
            <person name="Zhu Y."/>
            <person name="Jin Q."/>
        </authorList>
    </citation>
    <scope>NUCLEOTIDE SEQUENCE [LARGE SCALE GENOMIC DNA]</scope>
    <source>
        <strain>Q1</strain>
    </source>
</reference>
<sequence>MRLRHKPYAMDRINEYSHIVIGNPEERAGNWKEVFGNEQPIHIEVGTGRGRFMYDMAKANPHINYIGIEKFTSVVVDALDKLIEEELPNLKLINKDAEDLTVFFAKGEIDRVYLNFSDPWPKKRHTKRRLTYKTFLRNYEEVLVEGGEIHFKTDNQGLFEYSLMSMAEYGMLLTYLSLDLHNSDFEGNIMTEYEEKFSSKGHRIYRVEAKYRTEPMQ</sequence>
<comment type="function">
    <text evidence="2">Catalyzes the formation of N(7)-methylguanine at position 46 (m7G46) in tRNA.</text>
</comment>
<comment type="catalytic activity">
    <reaction evidence="2">
        <text>guanosine(46) in tRNA + S-adenosyl-L-methionine = N(7)-methylguanosine(46) in tRNA + S-adenosyl-L-homocysteine</text>
        <dbReference type="Rhea" id="RHEA:42708"/>
        <dbReference type="Rhea" id="RHEA-COMP:10188"/>
        <dbReference type="Rhea" id="RHEA-COMP:10189"/>
        <dbReference type="ChEBI" id="CHEBI:57856"/>
        <dbReference type="ChEBI" id="CHEBI:59789"/>
        <dbReference type="ChEBI" id="CHEBI:74269"/>
        <dbReference type="ChEBI" id="CHEBI:74480"/>
        <dbReference type="EC" id="2.1.1.33"/>
    </reaction>
</comment>
<comment type="pathway">
    <text evidence="2">tRNA modification; N(7)-methylguanine-tRNA biosynthesis.</text>
</comment>
<comment type="similarity">
    <text evidence="2">Belongs to the class I-like SAM-binding methyltransferase superfamily. TrmB family.</text>
</comment>
<feature type="chain" id="PRO_1000149645" description="tRNA (guanine-N(7)-)-methyltransferase">
    <location>
        <begin position="1"/>
        <end position="217"/>
    </location>
</feature>
<feature type="active site" evidence="1">
    <location>
        <position position="118"/>
    </location>
</feature>
<feature type="binding site" evidence="2">
    <location>
        <position position="44"/>
    </location>
    <ligand>
        <name>S-adenosyl-L-methionine</name>
        <dbReference type="ChEBI" id="CHEBI:59789"/>
    </ligand>
</feature>
<feature type="binding site" evidence="2">
    <location>
        <position position="69"/>
    </location>
    <ligand>
        <name>S-adenosyl-L-methionine</name>
        <dbReference type="ChEBI" id="CHEBI:59789"/>
    </ligand>
</feature>
<feature type="binding site" evidence="2">
    <location>
        <position position="96"/>
    </location>
    <ligand>
        <name>S-adenosyl-L-methionine</name>
        <dbReference type="ChEBI" id="CHEBI:59789"/>
    </ligand>
</feature>
<feature type="binding site" evidence="2">
    <location>
        <position position="118"/>
    </location>
    <ligand>
        <name>S-adenosyl-L-methionine</name>
        <dbReference type="ChEBI" id="CHEBI:59789"/>
    </ligand>
</feature>
<feature type="binding site" evidence="2">
    <location>
        <position position="122"/>
    </location>
    <ligand>
        <name>substrate</name>
    </ligand>
</feature>
<feature type="binding site" evidence="2">
    <location>
        <position position="154"/>
    </location>
    <ligand>
        <name>substrate</name>
    </ligand>
</feature>
<feature type="binding site" evidence="2">
    <location>
        <begin position="191"/>
        <end position="194"/>
    </location>
    <ligand>
        <name>substrate</name>
    </ligand>
</feature>
<protein>
    <recommendedName>
        <fullName evidence="2">tRNA (guanine-N(7)-)-methyltransferase</fullName>
        <ecNumber evidence="2">2.1.1.33</ecNumber>
    </recommendedName>
    <alternativeName>
        <fullName evidence="2">tRNA (guanine(46)-N(7))-methyltransferase</fullName>
    </alternativeName>
    <alternativeName>
        <fullName evidence="2">tRNA(m7G46)-methyltransferase</fullName>
    </alternativeName>
</protein>
<dbReference type="EC" id="2.1.1.33" evidence="2"/>
<dbReference type="EMBL" id="CP000227">
    <property type="protein sequence ID" value="ACM14938.1"/>
    <property type="molecule type" value="Genomic_DNA"/>
</dbReference>
<dbReference type="SMR" id="B9J1A0"/>
<dbReference type="KEGG" id="bcq:BCQ_4512"/>
<dbReference type="HOGENOM" id="CLU_050910_2_1_9"/>
<dbReference type="UniPathway" id="UPA00989"/>
<dbReference type="Proteomes" id="UP000000441">
    <property type="component" value="Chromosome"/>
</dbReference>
<dbReference type="GO" id="GO:0043527">
    <property type="term" value="C:tRNA methyltransferase complex"/>
    <property type="evidence" value="ECO:0007669"/>
    <property type="project" value="TreeGrafter"/>
</dbReference>
<dbReference type="GO" id="GO:0008176">
    <property type="term" value="F:tRNA (guanine(46)-N7)-methyltransferase activity"/>
    <property type="evidence" value="ECO:0007669"/>
    <property type="project" value="UniProtKB-UniRule"/>
</dbReference>
<dbReference type="CDD" id="cd02440">
    <property type="entry name" value="AdoMet_MTases"/>
    <property type="match status" value="1"/>
</dbReference>
<dbReference type="FunFam" id="3.40.50.150:FF:000035">
    <property type="entry name" value="tRNA (guanine-N(7)-)-methyltransferase"/>
    <property type="match status" value="1"/>
</dbReference>
<dbReference type="Gene3D" id="3.40.50.150">
    <property type="entry name" value="Vaccinia Virus protein VP39"/>
    <property type="match status" value="1"/>
</dbReference>
<dbReference type="HAMAP" id="MF_01057">
    <property type="entry name" value="tRNA_methyltr_TrmB"/>
    <property type="match status" value="1"/>
</dbReference>
<dbReference type="InterPro" id="IPR029063">
    <property type="entry name" value="SAM-dependent_MTases_sf"/>
</dbReference>
<dbReference type="InterPro" id="IPR003358">
    <property type="entry name" value="tRNA_(Gua-N-7)_MeTrfase_Trmb"/>
</dbReference>
<dbReference type="InterPro" id="IPR055361">
    <property type="entry name" value="tRNA_methyltr_TrmB_bact"/>
</dbReference>
<dbReference type="NCBIfam" id="NF001080">
    <property type="entry name" value="PRK00121.2-2"/>
    <property type="match status" value="1"/>
</dbReference>
<dbReference type="NCBIfam" id="TIGR00091">
    <property type="entry name" value="tRNA (guanosine(46)-N7)-methyltransferase TrmB"/>
    <property type="match status" value="1"/>
</dbReference>
<dbReference type="PANTHER" id="PTHR23417">
    <property type="entry name" value="3-DEOXY-D-MANNO-OCTULOSONIC-ACID TRANSFERASE/TRNA GUANINE-N 7 - -METHYLTRANSFERASE"/>
    <property type="match status" value="1"/>
</dbReference>
<dbReference type="PANTHER" id="PTHR23417:SF14">
    <property type="entry name" value="PENTACOTRIPEPTIDE-REPEAT REGION OF PRORP DOMAIN-CONTAINING PROTEIN"/>
    <property type="match status" value="1"/>
</dbReference>
<dbReference type="Pfam" id="PF02390">
    <property type="entry name" value="Methyltransf_4"/>
    <property type="match status" value="1"/>
</dbReference>
<dbReference type="SUPFAM" id="SSF53335">
    <property type="entry name" value="S-adenosyl-L-methionine-dependent methyltransferases"/>
    <property type="match status" value="1"/>
</dbReference>
<dbReference type="PROSITE" id="PS51625">
    <property type="entry name" value="SAM_MT_TRMB"/>
    <property type="match status" value="1"/>
</dbReference>
<organism>
    <name type="scientific">Bacillus cereus (strain Q1)</name>
    <dbReference type="NCBI Taxonomy" id="361100"/>
    <lineage>
        <taxon>Bacteria</taxon>
        <taxon>Bacillati</taxon>
        <taxon>Bacillota</taxon>
        <taxon>Bacilli</taxon>
        <taxon>Bacillales</taxon>
        <taxon>Bacillaceae</taxon>
        <taxon>Bacillus</taxon>
        <taxon>Bacillus cereus group</taxon>
    </lineage>
</organism>
<accession>B9J1A0</accession>
<evidence type="ECO:0000250" key="1"/>
<evidence type="ECO:0000255" key="2">
    <source>
        <dbReference type="HAMAP-Rule" id="MF_01057"/>
    </source>
</evidence>
<gene>
    <name evidence="2" type="primary">trmB</name>
    <name type="ordered locus">BCQ_4512</name>
</gene>